<proteinExistence type="inferred from homology"/>
<feature type="chain" id="PRO_1000119242" description="Deoxyuridine 5'-triphosphate nucleotidohydrolase">
    <location>
        <begin position="1"/>
        <end position="154"/>
    </location>
</feature>
<feature type="binding site" evidence="1">
    <location>
        <begin position="64"/>
        <end position="66"/>
    </location>
    <ligand>
        <name>substrate</name>
    </ligand>
</feature>
<feature type="binding site" evidence="1">
    <location>
        <position position="77"/>
    </location>
    <ligand>
        <name>substrate</name>
    </ligand>
</feature>
<feature type="binding site" evidence="1">
    <location>
        <begin position="81"/>
        <end position="83"/>
    </location>
    <ligand>
        <name>substrate</name>
    </ligand>
</feature>
<feature type="binding site" evidence="1">
    <location>
        <position position="91"/>
    </location>
    <ligand>
        <name>substrate</name>
    </ligand>
</feature>
<keyword id="KW-0378">Hydrolase</keyword>
<keyword id="KW-0460">Magnesium</keyword>
<keyword id="KW-0479">Metal-binding</keyword>
<keyword id="KW-0546">Nucleotide metabolism</keyword>
<name>DUT_MYCBT</name>
<protein>
    <recommendedName>
        <fullName evidence="1">Deoxyuridine 5'-triphosphate nucleotidohydrolase</fullName>
        <shortName evidence="1">dUTPase</shortName>
        <ecNumber evidence="1">3.6.1.23</ecNumber>
    </recommendedName>
    <alternativeName>
        <fullName evidence="1">dUTP pyrophosphatase</fullName>
    </alternativeName>
</protein>
<sequence>MSTTLAIVRLDPGLPLPSRAHDGDAGVDLYSAEDVELAPGRRALVRTGVAVAVPFGMVGLVHPRSGLATRVGLSIVNSPGTIDAGYRGEIKVALINLDPAAPIVVHRGDRIAQLLVQRVELVELVEVSSFDEAGLASTSRGDGGHGSSGGHASL</sequence>
<evidence type="ECO:0000255" key="1">
    <source>
        <dbReference type="HAMAP-Rule" id="MF_00116"/>
    </source>
</evidence>
<dbReference type="EC" id="3.6.1.23" evidence="1"/>
<dbReference type="EMBL" id="AP010918">
    <property type="protein sequence ID" value="BAH26985.1"/>
    <property type="molecule type" value="Genomic_DNA"/>
</dbReference>
<dbReference type="RefSeq" id="WP_003413930.1">
    <property type="nucleotide sequence ID" value="NZ_CP014566.1"/>
</dbReference>
<dbReference type="SMR" id="C1AFF6"/>
<dbReference type="GeneID" id="45426685"/>
<dbReference type="KEGG" id="mbt:JTY_2704"/>
<dbReference type="HOGENOM" id="CLU_068508_1_3_11"/>
<dbReference type="UniPathway" id="UPA00610">
    <property type="reaction ID" value="UER00666"/>
</dbReference>
<dbReference type="GO" id="GO:0004170">
    <property type="term" value="F:dUTP diphosphatase activity"/>
    <property type="evidence" value="ECO:0007669"/>
    <property type="project" value="UniProtKB-UniRule"/>
</dbReference>
<dbReference type="GO" id="GO:0000287">
    <property type="term" value="F:magnesium ion binding"/>
    <property type="evidence" value="ECO:0007669"/>
    <property type="project" value="UniProtKB-UniRule"/>
</dbReference>
<dbReference type="GO" id="GO:0006226">
    <property type="term" value="P:dUMP biosynthetic process"/>
    <property type="evidence" value="ECO:0007669"/>
    <property type="project" value="UniProtKB-UniRule"/>
</dbReference>
<dbReference type="GO" id="GO:0046081">
    <property type="term" value="P:dUTP catabolic process"/>
    <property type="evidence" value="ECO:0007669"/>
    <property type="project" value="InterPro"/>
</dbReference>
<dbReference type="CDD" id="cd07557">
    <property type="entry name" value="trimeric_dUTPase"/>
    <property type="match status" value="1"/>
</dbReference>
<dbReference type="FunFam" id="2.70.40.10:FF:000008">
    <property type="entry name" value="Deoxyuridine 5'-triphosphate nucleotidohydrolase"/>
    <property type="match status" value="1"/>
</dbReference>
<dbReference type="Gene3D" id="2.70.40.10">
    <property type="match status" value="1"/>
</dbReference>
<dbReference type="HAMAP" id="MF_00116">
    <property type="entry name" value="dUTPase_bact"/>
    <property type="match status" value="1"/>
</dbReference>
<dbReference type="InterPro" id="IPR008181">
    <property type="entry name" value="dUTPase"/>
</dbReference>
<dbReference type="InterPro" id="IPR029054">
    <property type="entry name" value="dUTPase-like"/>
</dbReference>
<dbReference type="InterPro" id="IPR036157">
    <property type="entry name" value="dUTPase-like_sf"/>
</dbReference>
<dbReference type="InterPro" id="IPR033704">
    <property type="entry name" value="dUTPase_trimeric"/>
</dbReference>
<dbReference type="NCBIfam" id="TIGR00576">
    <property type="entry name" value="dut"/>
    <property type="match status" value="1"/>
</dbReference>
<dbReference type="NCBIfam" id="NF001862">
    <property type="entry name" value="PRK00601.1"/>
    <property type="match status" value="1"/>
</dbReference>
<dbReference type="PANTHER" id="PTHR11241">
    <property type="entry name" value="DEOXYURIDINE 5'-TRIPHOSPHATE NUCLEOTIDOHYDROLASE"/>
    <property type="match status" value="1"/>
</dbReference>
<dbReference type="PANTHER" id="PTHR11241:SF0">
    <property type="entry name" value="DEOXYURIDINE 5'-TRIPHOSPHATE NUCLEOTIDOHYDROLASE"/>
    <property type="match status" value="1"/>
</dbReference>
<dbReference type="Pfam" id="PF00692">
    <property type="entry name" value="dUTPase"/>
    <property type="match status" value="1"/>
</dbReference>
<dbReference type="SUPFAM" id="SSF51283">
    <property type="entry name" value="dUTPase-like"/>
    <property type="match status" value="1"/>
</dbReference>
<gene>
    <name evidence="1" type="primary">dut</name>
    <name type="ordered locus">JTY_2704</name>
</gene>
<accession>C1AFF6</accession>
<organism>
    <name type="scientific">Mycobacterium bovis (strain BCG / Tokyo 172 / ATCC 35737 / TMC 1019)</name>
    <dbReference type="NCBI Taxonomy" id="561275"/>
    <lineage>
        <taxon>Bacteria</taxon>
        <taxon>Bacillati</taxon>
        <taxon>Actinomycetota</taxon>
        <taxon>Actinomycetes</taxon>
        <taxon>Mycobacteriales</taxon>
        <taxon>Mycobacteriaceae</taxon>
        <taxon>Mycobacterium</taxon>
        <taxon>Mycobacterium tuberculosis complex</taxon>
    </lineage>
</organism>
<comment type="function">
    <text evidence="1">This enzyme is involved in nucleotide metabolism: it produces dUMP, the immediate precursor of thymidine nucleotides and it decreases the intracellular concentration of dUTP so that uracil cannot be incorporated into DNA.</text>
</comment>
<comment type="catalytic activity">
    <reaction evidence="1">
        <text>dUTP + H2O = dUMP + diphosphate + H(+)</text>
        <dbReference type="Rhea" id="RHEA:10248"/>
        <dbReference type="ChEBI" id="CHEBI:15377"/>
        <dbReference type="ChEBI" id="CHEBI:15378"/>
        <dbReference type="ChEBI" id="CHEBI:33019"/>
        <dbReference type="ChEBI" id="CHEBI:61555"/>
        <dbReference type="ChEBI" id="CHEBI:246422"/>
        <dbReference type="EC" id="3.6.1.23"/>
    </reaction>
</comment>
<comment type="cofactor">
    <cofactor evidence="1">
        <name>Mg(2+)</name>
        <dbReference type="ChEBI" id="CHEBI:18420"/>
    </cofactor>
</comment>
<comment type="pathway">
    <text evidence="1">Pyrimidine metabolism; dUMP biosynthesis; dUMP from dCTP (dUTP route): step 2/2.</text>
</comment>
<comment type="subunit">
    <text evidence="1">Homotrimer.</text>
</comment>
<comment type="similarity">
    <text evidence="1">Belongs to the dUTPase family.</text>
</comment>
<reference key="1">
    <citation type="journal article" date="2009" name="Vaccine">
        <title>Whole genome sequence analysis of Mycobacterium bovis bacillus Calmette-Guerin (BCG) Tokyo 172: a comparative study of BCG vaccine substrains.</title>
        <authorList>
            <person name="Seki M."/>
            <person name="Honda I."/>
            <person name="Fujita I."/>
            <person name="Yano I."/>
            <person name="Yamamoto S."/>
            <person name="Koyama A."/>
        </authorList>
    </citation>
    <scope>NUCLEOTIDE SEQUENCE [LARGE SCALE GENOMIC DNA]</scope>
    <source>
        <strain>BCG / Tokyo 172 / ATCC 35737 / TMC 1019</strain>
    </source>
</reference>